<name>COBS_CLOBA</name>
<sequence length="252" mass="28058">MKNLFKGLMMSLSMFTIIPMPYVEWDEDGAKNMMKCYPIIGLIVGCVWFLGYKLINYLNISIVLKSALIMIIPFIITGMLHLDGFMDVCDAILSRRDKEEKLRILKDSTTGAFSVISVIILFFIQFGAVHSFLEYNKNPYILMFLPIISRNIVAYFFITIITIKESTLGSYFTKGTNIKDKVILILELALVCILFGSILGYIGIAILLIVAVAISLCVKKCFKEFGGISGDVAGFSLVVGEIVGLFSACLFT</sequence>
<gene>
    <name evidence="1" type="primary">cobS</name>
    <name type="ordered locus">CLH_2665</name>
</gene>
<proteinExistence type="inferred from homology"/>
<accession>B2UXE0</accession>
<keyword id="KW-1003">Cell membrane</keyword>
<keyword id="KW-0169">Cobalamin biosynthesis</keyword>
<keyword id="KW-0460">Magnesium</keyword>
<keyword id="KW-0472">Membrane</keyword>
<keyword id="KW-0808">Transferase</keyword>
<keyword id="KW-0812">Transmembrane</keyword>
<keyword id="KW-1133">Transmembrane helix</keyword>
<protein>
    <recommendedName>
        <fullName evidence="1">Adenosylcobinamide-GDP ribazoletransferase</fullName>
        <ecNumber evidence="1">2.7.8.26</ecNumber>
    </recommendedName>
    <alternativeName>
        <fullName evidence="1">Cobalamin synthase</fullName>
    </alternativeName>
    <alternativeName>
        <fullName evidence="1">Cobalamin-5'-phosphate synthase</fullName>
    </alternativeName>
</protein>
<feature type="chain" id="PRO_1000132563" description="Adenosylcobinamide-GDP ribazoletransferase">
    <location>
        <begin position="1"/>
        <end position="252"/>
    </location>
</feature>
<feature type="transmembrane region" description="Helical" evidence="1">
    <location>
        <begin position="4"/>
        <end position="24"/>
    </location>
</feature>
<feature type="transmembrane region" description="Helical" evidence="1">
    <location>
        <begin position="38"/>
        <end position="58"/>
    </location>
</feature>
<feature type="transmembrane region" description="Helical" evidence="1">
    <location>
        <begin position="60"/>
        <end position="80"/>
    </location>
</feature>
<feature type="transmembrane region" description="Helical" evidence="1">
    <location>
        <begin position="113"/>
        <end position="133"/>
    </location>
</feature>
<feature type="transmembrane region" description="Helical" evidence="1">
    <location>
        <begin position="141"/>
        <end position="161"/>
    </location>
</feature>
<feature type="transmembrane region" description="Helical" evidence="1">
    <location>
        <begin position="190"/>
        <end position="210"/>
    </location>
</feature>
<feature type="transmembrane region" description="Helical" evidence="1">
    <location>
        <begin position="232"/>
        <end position="252"/>
    </location>
</feature>
<organism>
    <name type="scientific">Clostridium botulinum (strain Alaska E43 / Type E3)</name>
    <dbReference type="NCBI Taxonomy" id="508767"/>
    <lineage>
        <taxon>Bacteria</taxon>
        <taxon>Bacillati</taxon>
        <taxon>Bacillota</taxon>
        <taxon>Clostridia</taxon>
        <taxon>Eubacteriales</taxon>
        <taxon>Clostridiaceae</taxon>
        <taxon>Clostridium</taxon>
    </lineage>
</organism>
<comment type="function">
    <text evidence="1">Joins adenosylcobinamide-GDP and alpha-ribazole to generate adenosylcobalamin (Ado-cobalamin). Also synthesizes adenosylcobalamin 5'-phosphate from adenosylcobinamide-GDP and alpha-ribazole 5'-phosphate.</text>
</comment>
<comment type="catalytic activity">
    <reaction evidence="1">
        <text>alpha-ribazole + adenosylcob(III)inamide-GDP = adenosylcob(III)alamin + GMP + H(+)</text>
        <dbReference type="Rhea" id="RHEA:16049"/>
        <dbReference type="ChEBI" id="CHEBI:10329"/>
        <dbReference type="ChEBI" id="CHEBI:15378"/>
        <dbReference type="ChEBI" id="CHEBI:18408"/>
        <dbReference type="ChEBI" id="CHEBI:58115"/>
        <dbReference type="ChEBI" id="CHEBI:60487"/>
        <dbReference type="EC" id="2.7.8.26"/>
    </reaction>
</comment>
<comment type="catalytic activity">
    <reaction evidence="1">
        <text>alpha-ribazole 5'-phosphate + adenosylcob(III)inamide-GDP = adenosylcob(III)alamin 5'-phosphate + GMP + H(+)</text>
        <dbReference type="Rhea" id="RHEA:23560"/>
        <dbReference type="ChEBI" id="CHEBI:15378"/>
        <dbReference type="ChEBI" id="CHEBI:57918"/>
        <dbReference type="ChEBI" id="CHEBI:58115"/>
        <dbReference type="ChEBI" id="CHEBI:60487"/>
        <dbReference type="ChEBI" id="CHEBI:60493"/>
        <dbReference type="EC" id="2.7.8.26"/>
    </reaction>
</comment>
<comment type="cofactor">
    <cofactor evidence="1">
        <name>Mg(2+)</name>
        <dbReference type="ChEBI" id="CHEBI:18420"/>
    </cofactor>
</comment>
<comment type="pathway">
    <text evidence="1">Cofactor biosynthesis; adenosylcobalamin biosynthesis; adenosylcobalamin from cob(II)yrinate a,c-diamide: step 7/7.</text>
</comment>
<comment type="subcellular location">
    <subcellularLocation>
        <location evidence="1">Cell membrane</location>
        <topology evidence="1">Multi-pass membrane protein</topology>
    </subcellularLocation>
</comment>
<comment type="similarity">
    <text evidence="1">Belongs to the CobS family.</text>
</comment>
<evidence type="ECO:0000255" key="1">
    <source>
        <dbReference type="HAMAP-Rule" id="MF_00719"/>
    </source>
</evidence>
<dbReference type="EC" id="2.7.8.26" evidence="1"/>
<dbReference type="EMBL" id="CP001078">
    <property type="protein sequence ID" value="ACD51595.1"/>
    <property type="molecule type" value="Genomic_DNA"/>
</dbReference>
<dbReference type="RefSeq" id="WP_012449923.1">
    <property type="nucleotide sequence ID" value="NC_010723.1"/>
</dbReference>
<dbReference type="KEGG" id="cbt:CLH_2665"/>
<dbReference type="HOGENOM" id="CLU_057426_1_2_9"/>
<dbReference type="UniPathway" id="UPA00148">
    <property type="reaction ID" value="UER00238"/>
</dbReference>
<dbReference type="GO" id="GO:0005886">
    <property type="term" value="C:plasma membrane"/>
    <property type="evidence" value="ECO:0007669"/>
    <property type="project" value="UniProtKB-SubCell"/>
</dbReference>
<dbReference type="GO" id="GO:0051073">
    <property type="term" value="F:adenosylcobinamide-GDP ribazoletransferase activity"/>
    <property type="evidence" value="ECO:0007669"/>
    <property type="project" value="UniProtKB-UniRule"/>
</dbReference>
<dbReference type="GO" id="GO:0008818">
    <property type="term" value="F:cobalamin 5'-phosphate synthase activity"/>
    <property type="evidence" value="ECO:0007669"/>
    <property type="project" value="UniProtKB-UniRule"/>
</dbReference>
<dbReference type="GO" id="GO:0009236">
    <property type="term" value="P:cobalamin biosynthetic process"/>
    <property type="evidence" value="ECO:0007669"/>
    <property type="project" value="UniProtKB-UniRule"/>
</dbReference>
<dbReference type="HAMAP" id="MF_00719">
    <property type="entry name" value="CobS"/>
    <property type="match status" value="1"/>
</dbReference>
<dbReference type="InterPro" id="IPR003805">
    <property type="entry name" value="CobS"/>
</dbReference>
<dbReference type="PANTHER" id="PTHR34148">
    <property type="entry name" value="ADENOSYLCOBINAMIDE-GDP RIBAZOLETRANSFERASE"/>
    <property type="match status" value="1"/>
</dbReference>
<dbReference type="PANTHER" id="PTHR34148:SF1">
    <property type="entry name" value="ADENOSYLCOBINAMIDE-GDP RIBAZOLETRANSFERASE"/>
    <property type="match status" value="1"/>
</dbReference>
<dbReference type="Pfam" id="PF02654">
    <property type="entry name" value="CobS"/>
    <property type="match status" value="1"/>
</dbReference>
<reference key="1">
    <citation type="submission" date="2008-05" db="EMBL/GenBank/DDBJ databases">
        <title>Complete genome sequence of Clostridium botulinum E3 str. Alaska E43.</title>
        <authorList>
            <person name="Brinkac L.M."/>
            <person name="Brown J.L."/>
            <person name="Bruce D."/>
            <person name="Detter C."/>
            <person name="Munk C."/>
            <person name="Smith L.A."/>
            <person name="Smith T.J."/>
            <person name="Sutton G."/>
            <person name="Brettin T.S."/>
        </authorList>
    </citation>
    <scope>NUCLEOTIDE SEQUENCE [LARGE SCALE GENOMIC DNA]</scope>
    <source>
        <strain>Alaska E43 / Type E3</strain>
    </source>
</reference>